<dbReference type="EC" id="2.7.7.7" evidence="1"/>
<dbReference type="EC" id="2.7.7.49" evidence="1"/>
<dbReference type="EC" id="3.1.26.4" evidence="1"/>
<dbReference type="EMBL" id="D00331">
    <property type="status" value="NOT_ANNOTATED_CDS"/>
    <property type="molecule type" value="Genomic_DNA"/>
</dbReference>
<dbReference type="PIR" id="F28925">
    <property type="entry name" value="JDVLJ3"/>
</dbReference>
<dbReference type="Proteomes" id="UP000007914">
    <property type="component" value="Genome"/>
</dbReference>
<dbReference type="GO" id="GO:0003677">
    <property type="term" value="F:DNA binding"/>
    <property type="evidence" value="ECO:0007669"/>
    <property type="project" value="UniProtKB-UniRule"/>
</dbReference>
<dbReference type="GO" id="GO:0003887">
    <property type="term" value="F:DNA-directed DNA polymerase activity"/>
    <property type="evidence" value="ECO:0007669"/>
    <property type="project" value="UniProtKB-UniRule"/>
</dbReference>
<dbReference type="GO" id="GO:0046872">
    <property type="term" value="F:metal ion binding"/>
    <property type="evidence" value="ECO:0007669"/>
    <property type="project" value="UniProtKB-UniRule"/>
</dbReference>
<dbReference type="GO" id="GO:0003964">
    <property type="term" value="F:RNA-directed DNA polymerase activity"/>
    <property type="evidence" value="ECO:0007669"/>
    <property type="project" value="UniProtKB-UniRule"/>
</dbReference>
<dbReference type="GO" id="GO:0004523">
    <property type="term" value="F:RNA-DNA hybrid ribonuclease activity"/>
    <property type="evidence" value="ECO:0007669"/>
    <property type="project" value="UniProtKB-UniRule"/>
</dbReference>
<dbReference type="GO" id="GO:0006260">
    <property type="term" value="P:DNA replication"/>
    <property type="evidence" value="ECO:0007669"/>
    <property type="project" value="UniProtKB-UniRule"/>
</dbReference>
<dbReference type="GO" id="GO:0052170">
    <property type="term" value="P:symbiont-mediated suppression of host innate immune response"/>
    <property type="evidence" value="ECO:0007669"/>
    <property type="project" value="UniProtKB-UniRule"/>
</dbReference>
<dbReference type="FunFam" id="3.30.70.270:FF:000009">
    <property type="entry name" value="Protein P"/>
    <property type="match status" value="1"/>
</dbReference>
<dbReference type="Gene3D" id="3.30.70.270">
    <property type="match status" value="1"/>
</dbReference>
<dbReference type="HAMAP" id="MF_04073">
    <property type="entry name" value="HBV_DPOL"/>
    <property type="match status" value="1"/>
</dbReference>
<dbReference type="InterPro" id="IPR043502">
    <property type="entry name" value="DNA/RNA_pol_sf"/>
</dbReference>
<dbReference type="InterPro" id="IPR001462">
    <property type="entry name" value="DNApol_viral_C"/>
</dbReference>
<dbReference type="InterPro" id="IPR000201">
    <property type="entry name" value="DNApol_viral_N"/>
</dbReference>
<dbReference type="InterPro" id="IPR037531">
    <property type="entry name" value="HBV_DPOL"/>
</dbReference>
<dbReference type="InterPro" id="IPR043128">
    <property type="entry name" value="Rev_trsase/Diguanyl_cyclase"/>
</dbReference>
<dbReference type="InterPro" id="IPR000477">
    <property type="entry name" value="RT_dom"/>
</dbReference>
<dbReference type="InterPro" id="IPR051320">
    <property type="entry name" value="Viral_Replic_Matur_Polypro"/>
</dbReference>
<dbReference type="PANTHER" id="PTHR33064:SF29">
    <property type="entry name" value="PEPTIDASE A2 DOMAIN-CONTAINING PROTEIN-RELATED"/>
    <property type="match status" value="1"/>
</dbReference>
<dbReference type="PANTHER" id="PTHR33064">
    <property type="entry name" value="POL PROTEIN"/>
    <property type="match status" value="1"/>
</dbReference>
<dbReference type="Pfam" id="PF00336">
    <property type="entry name" value="DNA_pol_viral_C"/>
    <property type="match status" value="1"/>
</dbReference>
<dbReference type="Pfam" id="PF00242">
    <property type="entry name" value="DNA_pol_viral_N"/>
    <property type="match status" value="1"/>
</dbReference>
<dbReference type="Pfam" id="PF00078">
    <property type="entry name" value="RVT_1"/>
    <property type="match status" value="1"/>
</dbReference>
<dbReference type="SUPFAM" id="SSF56672">
    <property type="entry name" value="DNA/RNA polymerases"/>
    <property type="match status" value="1"/>
</dbReference>
<dbReference type="PROSITE" id="PS50878">
    <property type="entry name" value="RT_POL"/>
    <property type="match status" value="1"/>
</dbReference>
<gene>
    <name evidence="1" type="primary">P</name>
</gene>
<keyword id="KW-0235">DNA replication</keyword>
<keyword id="KW-0238">DNA-binding</keyword>
<keyword id="KW-0239">DNA-directed DNA polymerase</keyword>
<keyword id="KW-0255">Endonuclease</keyword>
<keyword id="KW-0945">Host-virus interaction</keyword>
<keyword id="KW-0378">Hydrolase</keyword>
<keyword id="KW-1090">Inhibition of host innate immune response by virus</keyword>
<keyword id="KW-1113">Inhibition of host RLR pathway by virus</keyword>
<keyword id="KW-0460">Magnesium</keyword>
<keyword id="KW-0479">Metal-binding</keyword>
<keyword id="KW-0511">Multifunctional enzyme</keyword>
<keyword id="KW-0540">Nuclease</keyword>
<keyword id="KW-0548">Nucleotidyltransferase</keyword>
<keyword id="KW-0695">RNA-directed DNA polymerase</keyword>
<keyword id="KW-0808">Transferase</keyword>
<keyword id="KW-0899">Viral immunoevasion</keyword>
<proteinExistence type="inferred from homology"/>
<accession>P17393</accession>
<comment type="function">
    <text evidence="1">Multifunctional enzyme that converts the viral RNA genome into dsDNA in viral cytoplasmic capsids. This enzyme displays a DNA polymerase activity that can copy either DNA or RNA templates, and a ribonuclease H (RNase H) activity that cleaves the RNA strand of RNA-DNA heteroduplexes in a partially processive 3'- to 5'-endonucleasic mode. Neo-synthesized pregenomic RNA (pgRNA) are encapsidated together with the P protein, and reverse-transcribed inside the nucleocapsid. Initiation of reverse-transcription occurs first by binding the epsilon loop on the pgRNA genome, and is initiated by protein priming, thereby the 5'-end of (-)DNA is covalently linked to P protein. Partial (+)DNA is synthesized from the (-)DNA template and generates the relaxed circular DNA (RC-DNA) genome. After budding and infection, the RC-DNA migrates in the nucleus, and is converted into a plasmid-like covalently closed circular DNA (cccDNA). The activity of P protein does not seem to be necessary for cccDNA generation, and is presumably released from (+)DNA by host nuclear DNA repair machinery.</text>
</comment>
<comment type="catalytic activity">
    <reaction evidence="1">
        <text>DNA(n) + a 2'-deoxyribonucleoside 5'-triphosphate = DNA(n+1) + diphosphate</text>
        <dbReference type="Rhea" id="RHEA:22508"/>
        <dbReference type="Rhea" id="RHEA-COMP:17339"/>
        <dbReference type="Rhea" id="RHEA-COMP:17340"/>
        <dbReference type="ChEBI" id="CHEBI:33019"/>
        <dbReference type="ChEBI" id="CHEBI:61560"/>
        <dbReference type="ChEBI" id="CHEBI:173112"/>
        <dbReference type="EC" id="2.7.7.7"/>
    </reaction>
</comment>
<comment type="catalytic activity">
    <reaction evidence="1">
        <text>DNA(n) + a 2'-deoxyribonucleoside 5'-triphosphate = DNA(n+1) + diphosphate</text>
        <dbReference type="Rhea" id="RHEA:22508"/>
        <dbReference type="Rhea" id="RHEA-COMP:17339"/>
        <dbReference type="Rhea" id="RHEA-COMP:17340"/>
        <dbReference type="ChEBI" id="CHEBI:33019"/>
        <dbReference type="ChEBI" id="CHEBI:61560"/>
        <dbReference type="ChEBI" id="CHEBI:173112"/>
        <dbReference type="EC" id="2.7.7.49"/>
    </reaction>
</comment>
<comment type="catalytic activity">
    <reaction evidence="1">
        <text>Endonucleolytic cleavage to 5'-phosphomonoester.</text>
        <dbReference type="EC" id="3.1.26.4"/>
    </reaction>
</comment>
<comment type="activity regulation">
    <text evidence="1">Activated by host HSP70 and HSP40 in vitro to be able to bind the epsilon loop of the pgRNA. Because deletion of the RNase H region renders the protein partly chaperone-independent, the chaperones may be needed indirectly to relieve occlusion of the RNA-binding site by this domain. Inhibited by several reverse-transcriptase inhibitors: Lamivudine, Adefovir and Entecavir.</text>
</comment>
<comment type="domain">
    <text evidence="1">Terminal protein domain (TP) is hepadnavirus-specific. Spacer domain is highly variable and separates the TP and RT domains. Polymerase/reverse-transcriptase domain (RT) and ribonuclease H domain (RH) are similar to retrovirus reverse transcriptase/RNase H.</text>
</comment>
<comment type="domain">
    <text evidence="1">The polymerase/reverse transcriptase (RT) and ribonuclease H (RH) domains are structured in five subdomains: finger, palm, thumb, connection and RNase H. Within the palm subdomain, the 'primer grip' region is thought to be involved in the positioning of the primer terminus for accommodating the incoming nucleotide. The RH domain stabilizes the association of RT with primer-template.</text>
</comment>
<comment type="miscellaneous">
    <text evidence="1">Hepadnaviral virions contain probably just one P protein molecule per particle.</text>
</comment>
<comment type="similarity">
    <text evidence="1">Belongs to the hepadnaviridae P protein family.</text>
</comment>
<organismHost>
    <name type="scientific">Homo sapiens</name>
    <name type="common">Human</name>
    <dbReference type="NCBI Taxonomy" id="9606"/>
</organismHost>
<organismHost>
    <name type="scientific">Pan troglodytes</name>
    <name type="common">Chimpanzee</name>
    <dbReference type="NCBI Taxonomy" id="9598"/>
</organismHost>
<sequence length="843" mass="94394">MPLSYQHFRKLLLLDDEAGPLEEELPRLADEGLNRRVAEDLNLGNLNVSIPWTHKVGNFTGLYSSTVPSFNPQWQTPSFPDIHLQEDIINKCKQFVGPLTVNEKRRLKLIMPARFYPNVTKYLPLDKGIKPYYPEHVVNHYFQTRHYLHTLWKAGILYKRETTRSASFCGSPYSWEQELQHGRLVLQTSTRHGDKSFRPQSSGILSRSPVGPCIQSQLRQSRLGPQPTQGQLAGLQQGGSGSIRAGIHSTPWGTVGVEPSSSGHTHNCANSSSSCLHQSAVRKEAYSPVSTSKRHSSSGNAVELHHVPPNSSRSQSQGSVLSCWWLQFRNSKPCSEHCLFHIVNLIDDWGPCAEHGEHRIRTPRTPARVTGGVFLVDKNPHNTSESRLVVDFSQFSRGNTRVSWPKFAVPNLQSLTNLLSSDLSWLSLDVSAAFYHLPLHPAAMPHLLVGSSGLSRYVARLSSNSRIINHQHRTMQNLHDSCSRNLYVSLMLLYKTYGRKLHLYSHPIILGFRKIPMGVGLSPFLLAQFTSAICSVVRRAFPHCLAFSYMDDVVLGAKSVQHLESLYAAVTNFLLSLGIHLNPQKTKRWGYSLNFMGYVIGSWGTLPQEHIVLKIKQCFRKLPVNRPIDWKVCQRIVGLLGFAAPFTQCGYPALMPLYACIQAKQAFTFSPTYKAFLNKQYLNLYPVARQRPGLCQVFADATPTGWGLAIGHQRMRGTFVSPLPIHTVELLAACFARSRSGAKLIGTDNSVVLSRKYTSFPWLLGCAANWILRGTSFVYVPSALNPADDPSRGRLGLYRPLLRLPYRPTTGRTSLYADSPSVPSHLPDRVHFASPLHVAWRPP</sequence>
<evidence type="ECO:0000255" key="1">
    <source>
        <dbReference type="HAMAP-Rule" id="MF_04073"/>
    </source>
</evidence>
<evidence type="ECO:0000256" key="2">
    <source>
        <dbReference type="SAM" id="MobiDB-lite"/>
    </source>
</evidence>
<name>DPOL_HBVB2</name>
<organism>
    <name type="scientific">Hepatitis B virus genotype B2 (isolate Indonesia/pIDW420/1988)</name>
    <name type="common">HBV-B</name>
    <dbReference type="NCBI Taxonomy" id="10412"/>
    <lineage>
        <taxon>Viruses</taxon>
        <taxon>Riboviria</taxon>
        <taxon>Pararnavirae</taxon>
        <taxon>Artverviricota</taxon>
        <taxon>Revtraviricetes</taxon>
        <taxon>Blubervirales</taxon>
        <taxon>Hepadnaviridae</taxon>
        <taxon>Orthohepadnavirus</taxon>
        <taxon>Hepatitis B virus</taxon>
    </lineage>
</organism>
<reference key="1">
    <citation type="journal article" date="1988" name="J. Gen. Virol.">
        <title>Typing hepatitis B virus by homology in nucleotide sequence: comparison of surface antigen subtypes.</title>
        <authorList>
            <person name="Okamoto H."/>
            <person name="Tsuda F."/>
            <person name="Sakugawa H."/>
            <person name="Sastrosoewignjo R.I."/>
            <person name="Imai M."/>
            <person name="Miyakawa Y."/>
            <person name="Mayumi M."/>
        </authorList>
    </citation>
    <scope>NUCLEOTIDE SEQUENCE [GENOMIC DNA]</scope>
</reference>
<reference key="2">
    <citation type="journal article" date="2007" name="World J. Gastroenterol.">
        <title>Hepatitis B virus replication.</title>
        <authorList>
            <person name="Beck J."/>
            <person name="Nassal M."/>
        </authorList>
    </citation>
    <scope>REVIEW</scope>
</reference>
<feature type="chain" id="PRO_0000222340" description="Protein P">
    <location>
        <begin position="1"/>
        <end position="843"/>
    </location>
</feature>
<feature type="domain" description="Reverse transcriptase" evidence="1">
    <location>
        <begin position="357"/>
        <end position="600"/>
    </location>
</feature>
<feature type="region of interest" description="Terminal protein domain (TP)" evidence="1">
    <location>
        <begin position="1"/>
        <end position="177"/>
    </location>
</feature>
<feature type="region of interest" description="Spacer" evidence="1">
    <location>
        <begin position="178"/>
        <end position="346"/>
    </location>
</feature>
<feature type="region of interest" description="Disordered" evidence="2">
    <location>
        <begin position="221"/>
        <end position="240"/>
    </location>
</feature>
<feature type="region of interest" description="Disordered" evidence="2">
    <location>
        <begin position="289"/>
        <end position="315"/>
    </location>
</feature>
<feature type="region of interest" description="Polymerase/reverse transcriptase domain (RT)" evidence="1">
    <location>
        <begin position="347"/>
        <end position="690"/>
    </location>
</feature>
<feature type="compositionally biased region" description="Low complexity" evidence="2">
    <location>
        <begin position="223"/>
        <end position="235"/>
    </location>
</feature>
<feature type="binding site" evidence="1">
    <location>
        <position position="429"/>
    </location>
    <ligand>
        <name>Mg(2+)</name>
        <dbReference type="ChEBI" id="CHEBI:18420"/>
        <note>catalytic</note>
    </ligand>
</feature>
<feature type="binding site" evidence="1">
    <location>
        <position position="551"/>
    </location>
    <ligand>
        <name>Mg(2+)</name>
        <dbReference type="ChEBI" id="CHEBI:18420"/>
        <note>catalytic</note>
    </ligand>
</feature>
<feature type="binding site" evidence="1">
    <location>
        <position position="552"/>
    </location>
    <ligand>
        <name>Mg(2+)</name>
        <dbReference type="ChEBI" id="CHEBI:18420"/>
        <note>catalytic</note>
    </ligand>
</feature>
<feature type="site" description="Priming of reverse-transcription by covalently linking the first nucleotide of the (-)DNA" evidence="1">
    <location>
        <position position="63"/>
    </location>
</feature>
<protein>
    <recommendedName>
        <fullName evidence="1">Protein P</fullName>
    </recommendedName>
    <domain>
        <recommendedName>
            <fullName evidence="1">DNA-directed DNA polymerase</fullName>
            <ecNumber evidence="1">2.7.7.7</ecNumber>
        </recommendedName>
    </domain>
    <domain>
        <recommendedName>
            <fullName evidence="1">RNA-directed DNA polymerase</fullName>
            <ecNumber evidence="1">2.7.7.49</ecNumber>
        </recommendedName>
    </domain>
    <domain>
        <recommendedName>
            <fullName evidence="1">Ribonuclease H</fullName>
            <ecNumber evidence="1">3.1.26.4</ecNumber>
        </recommendedName>
    </domain>
</protein>